<gene>
    <name evidence="1" type="primary">gmk</name>
    <name type="ordered locus">BT_2009</name>
</gene>
<comment type="function">
    <text evidence="1">Essential for recycling GMP and indirectly, cGMP.</text>
</comment>
<comment type="catalytic activity">
    <reaction evidence="1">
        <text>GMP + ATP = GDP + ADP</text>
        <dbReference type="Rhea" id="RHEA:20780"/>
        <dbReference type="ChEBI" id="CHEBI:30616"/>
        <dbReference type="ChEBI" id="CHEBI:58115"/>
        <dbReference type="ChEBI" id="CHEBI:58189"/>
        <dbReference type="ChEBI" id="CHEBI:456216"/>
        <dbReference type="EC" id="2.7.4.8"/>
    </reaction>
</comment>
<comment type="subcellular location">
    <subcellularLocation>
        <location evidence="1">Cytoplasm</location>
    </subcellularLocation>
</comment>
<comment type="similarity">
    <text evidence="1">Belongs to the guanylate kinase family.</text>
</comment>
<protein>
    <recommendedName>
        <fullName evidence="1">Guanylate kinase</fullName>
        <ecNumber evidence="1">2.7.4.8</ecNumber>
    </recommendedName>
    <alternativeName>
        <fullName evidence="1">GMP kinase</fullName>
    </alternativeName>
</protein>
<feature type="chain" id="PRO_0000170499" description="Guanylate kinase">
    <location>
        <begin position="1"/>
        <end position="204"/>
    </location>
</feature>
<feature type="domain" description="Guanylate kinase-like" evidence="1">
    <location>
        <begin position="18"/>
        <end position="198"/>
    </location>
</feature>
<feature type="binding site" evidence="1">
    <location>
        <begin position="25"/>
        <end position="32"/>
    </location>
    <ligand>
        <name>ATP</name>
        <dbReference type="ChEBI" id="CHEBI:30616"/>
    </ligand>
</feature>
<reference key="1">
    <citation type="journal article" date="2003" name="Science">
        <title>A genomic view of the human-Bacteroides thetaiotaomicron symbiosis.</title>
        <authorList>
            <person name="Xu J."/>
            <person name="Bjursell M.K."/>
            <person name="Himrod J."/>
            <person name="Deng S."/>
            <person name="Carmichael L.K."/>
            <person name="Chiang H.C."/>
            <person name="Hooper L.V."/>
            <person name="Gordon J.I."/>
        </authorList>
    </citation>
    <scope>NUCLEOTIDE SEQUENCE [LARGE SCALE GENOMIC DNA]</scope>
    <source>
        <strain>ATCC 29148 / DSM 2079 / JCM 5827 / CCUG 10774 / NCTC 10582 / VPI-5482 / E50</strain>
    </source>
</reference>
<keyword id="KW-0067">ATP-binding</keyword>
<keyword id="KW-0963">Cytoplasm</keyword>
<keyword id="KW-0418">Kinase</keyword>
<keyword id="KW-0547">Nucleotide-binding</keyword>
<keyword id="KW-1185">Reference proteome</keyword>
<keyword id="KW-0808">Transferase</keyword>
<proteinExistence type="inferred from homology"/>
<dbReference type="EC" id="2.7.4.8" evidence="1"/>
<dbReference type="EMBL" id="AE015928">
    <property type="protein sequence ID" value="AAO77116.1"/>
    <property type="molecule type" value="Genomic_DNA"/>
</dbReference>
<dbReference type="RefSeq" id="NP_810922.1">
    <property type="nucleotide sequence ID" value="NC_004663.1"/>
</dbReference>
<dbReference type="SMR" id="Q8A677"/>
<dbReference type="FunCoup" id="Q8A677">
    <property type="interactions" value="467"/>
</dbReference>
<dbReference type="STRING" id="226186.BT_2009"/>
<dbReference type="PaxDb" id="226186-BT_2009"/>
<dbReference type="EnsemblBacteria" id="AAO77116">
    <property type="protein sequence ID" value="AAO77116"/>
    <property type="gene ID" value="BT_2009"/>
</dbReference>
<dbReference type="KEGG" id="bth:BT_2009"/>
<dbReference type="PATRIC" id="fig|226186.12.peg.2062"/>
<dbReference type="eggNOG" id="COG0194">
    <property type="taxonomic scope" value="Bacteria"/>
</dbReference>
<dbReference type="HOGENOM" id="CLU_001715_1_1_10"/>
<dbReference type="InParanoid" id="Q8A677"/>
<dbReference type="OrthoDB" id="9808150at2"/>
<dbReference type="Proteomes" id="UP000001414">
    <property type="component" value="Chromosome"/>
</dbReference>
<dbReference type="GO" id="GO:0005829">
    <property type="term" value="C:cytosol"/>
    <property type="evidence" value="ECO:0000318"/>
    <property type="project" value="GO_Central"/>
</dbReference>
<dbReference type="GO" id="GO:0005524">
    <property type="term" value="F:ATP binding"/>
    <property type="evidence" value="ECO:0007669"/>
    <property type="project" value="UniProtKB-UniRule"/>
</dbReference>
<dbReference type="GO" id="GO:0004385">
    <property type="term" value="F:guanylate kinase activity"/>
    <property type="evidence" value="ECO:0000318"/>
    <property type="project" value="GO_Central"/>
</dbReference>
<dbReference type="CDD" id="cd00071">
    <property type="entry name" value="GMPK"/>
    <property type="match status" value="1"/>
</dbReference>
<dbReference type="FunFam" id="3.30.63.10:FF:000005">
    <property type="entry name" value="Guanylate kinase"/>
    <property type="match status" value="1"/>
</dbReference>
<dbReference type="Gene3D" id="3.30.63.10">
    <property type="entry name" value="Guanylate Kinase phosphate binding domain"/>
    <property type="match status" value="1"/>
</dbReference>
<dbReference type="Gene3D" id="3.40.50.300">
    <property type="entry name" value="P-loop containing nucleotide triphosphate hydrolases"/>
    <property type="match status" value="1"/>
</dbReference>
<dbReference type="HAMAP" id="MF_00328">
    <property type="entry name" value="Guanylate_kinase"/>
    <property type="match status" value="1"/>
</dbReference>
<dbReference type="InterPro" id="IPR008145">
    <property type="entry name" value="GK/Ca_channel_bsu"/>
</dbReference>
<dbReference type="InterPro" id="IPR008144">
    <property type="entry name" value="Guanylate_kin-like_dom"/>
</dbReference>
<dbReference type="InterPro" id="IPR017665">
    <property type="entry name" value="Guanylate_kinase"/>
</dbReference>
<dbReference type="InterPro" id="IPR020590">
    <property type="entry name" value="Guanylate_kinase_CS"/>
</dbReference>
<dbReference type="InterPro" id="IPR027417">
    <property type="entry name" value="P-loop_NTPase"/>
</dbReference>
<dbReference type="NCBIfam" id="TIGR03263">
    <property type="entry name" value="guanyl_kin"/>
    <property type="match status" value="1"/>
</dbReference>
<dbReference type="PANTHER" id="PTHR23117:SF13">
    <property type="entry name" value="GUANYLATE KINASE"/>
    <property type="match status" value="1"/>
</dbReference>
<dbReference type="PANTHER" id="PTHR23117">
    <property type="entry name" value="GUANYLATE KINASE-RELATED"/>
    <property type="match status" value="1"/>
</dbReference>
<dbReference type="Pfam" id="PF00625">
    <property type="entry name" value="Guanylate_kin"/>
    <property type="match status" value="1"/>
</dbReference>
<dbReference type="SMART" id="SM00072">
    <property type="entry name" value="GuKc"/>
    <property type="match status" value="1"/>
</dbReference>
<dbReference type="SUPFAM" id="SSF52540">
    <property type="entry name" value="P-loop containing nucleoside triphosphate hydrolases"/>
    <property type="match status" value="1"/>
</dbReference>
<dbReference type="PROSITE" id="PS00856">
    <property type="entry name" value="GUANYLATE_KINASE_1"/>
    <property type="match status" value="1"/>
</dbReference>
<dbReference type="PROSITE" id="PS50052">
    <property type="entry name" value="GUANYLATE_KINASE_2"/>
    <property type="match status" value="1"/>
</dbReference>
<sequence length="204" mass="23464">MSTFSVFNFQFSIKQMTGKLIIFSAPSGSGKSTIINYLLTQNLNLAFSISATSRPPRGTEKHGVEYFFLTPEEFRCRIENNEFLEYEEVYKDRYYGTLKEQVEKQLEKGQNVVFDLDVVGGCNIKKYYGERALSIFVQPPSIEELRCRLTGRGTDEPEVIECRIAKAEYEMTFAPQFDRVIVNDDLEAAKAETLEVIKEFLNKE</sequence>
<evidence type="ECO:0000255" key="1">
    <source>
        <dbReference type="HAMAP-Rule" id="MF_00328"/>
    </source>
</evidence>
<organism>
    <name type="scientific">Bacteroides thetaiotaomicron (strain ATCC 29148 / DSM 2079 / JCM 5827 / CCUG 10774 / NCTC 10582 / VPI-5482 / E50)</name>
    <dbReference type="NCBI Taxonomy" id="226186"/>
    <lineage>
        <taxon>Bacteria</taxon>
        <taxon>Pseudomonadati</taxon>
        <taxon>Bacteroidota</taxon>
        <taxon>Bacteroidia</taxon>
        <taxon>Bacteroidales</taxon>
        <taxon>Bacteroidaceae</taxon>
        <taxon>Bacteroides</taxon>
    </lineage>
</organism>
<name>KGUA_BACTN</name>
<accession>Q8A677</accession>